<keyword id="KW-0113">Calvin cycle</keyword>
<keyword id="KW-0120">Carbon dioxide fixation</keyword>
<keyword id="KW-0456">Lyase</keyword>
<keyword id="KW-0460">Magnesium</keyword>
<keyword id="KW-0479">Metal-binding</keyword>
<keyword id="KW-0503">Monooxygenase</keyword>
<keyword id="KW-0560">Oxidoreductase</keyword>
<keyword id="KW-0602">Photosynthesis</keyword>
<gene>
    <name type="primary">cbbM</name>
    <name type="synonym">cbbL2</name>
    <name type="synonym">rbpL</name>
</gene>
<organism>
    <name type="scientific">Rhodobacter capsulatus</name>
    <name type="common">Rhodopseudomonas capsulata</name>
    <dbReference type="NCBI Taxonomy" id="1061"/>
    <lineage>
        <taxon>Bacteria</taxon>
        <taxon>Pseudomonadati</taxon>
        <taxon>Pseudomonadota</taxon>
        <taxon>Alphaproteobacteria</taxon>
        <taxon>Rhodobacterales</taxon>
        <taxon>Rhodobacter group</taxon>
        <taxon>Rhodobacter</taxon>
    </lineage>
</organism>
<name>RBL2_RHOCA</name>
<sequence>MDQSNRYARLDLKEADLIAGGRHVLCAYIMKPKAGYGYLETAAHFAAESSTGTNVEVSTTDDFTRGVDALVYEIDPEKEIMKIAYPVELFDRNIIDGGAMLCSFLTLTIGNNQGMGDVEYAKMHDFYVPPCYLRLFDGPSMNIADMWRVLGRPVVDGGMVVGTIIKPKLGLRPKPFADACYEFWLGGDFIKNDEPQGNQTFAPLKETIRLVADAMKRAQDETGEAKLFSANITADDHYEMVARGEYILETFGENADHVAFLVDGYVTGPAAITTARRSFPRQFLHYHRAGHGAVTSPQSMRGYTAFVLSKMSRLQGASGIHTGTMGYGKMEGDASDKIMAYMLNDEAAQGPFYHQDWLGMKATTPIISGGMNALRLPGFFDNLGHSNVIQTSGGGAFGHLDGATAGAKSLRQSCDAWKAGVDLVTYAKSHRELARAFESFPNDADKLYPGWRVALGVN</sequence>
<proteinExistence type="inferred from homology"/>
<evidence type="ECO:0000250" key="1"/>
<evidence type="ECO:0000305" key="2"/>
<feature type="chain" id="PRO_0000062664" description="Ribulose bisphosphate carboxylase">
    <location>
        <begin position="1"/>
        <end position="458"/>
    </location>
</feature>
<feature type="active site" description="Proton acceptor" evidence="1">
    <location>
        <position position="166"/>
    </location>
</feature>
<feature type="active site" description="Proton acceptor" evidence="1">
    <location>
        <position position="287"/>
    </location>
</feature>
<feature type="binding site" description="in homodimeric partner" evidence="1">
    <location>
        <position position="111"/>
    </location>
    <ligand>
        <name>substrate</name>
    </ligand>
</feature>
<feature type="binding site" evidence="1">
    <location>
        <position position="168"/>
    </location>
    <ligand>
        <name>substrate</name>
    </ligand>
</feature>
<feature type="binding site" description="via carbamate group" evidence="1">
    <location>
        <position position="191"/>
    </location>
    <ligand>
        <name>Mg(2+)</name>
        <dbReference type="ChEBI" id="CHEBI:18420"/>
    </ligand>
</feature>
<feature type="binding site" evidence="1">
    <location>
        <position position="193"/>
    </location>
    <ligand>
        <name>Mg(2+)</name>
        <dbReference type="ChEBI" id="CHEBI:18420"/>
    </ligand>
</feature>
<feature type="binding site" evidence="1">
    <location>
        <position position="194"/>
    </location>
    <ligand>
        <name>Mg(2+)</name>
        <dbReference type="ChEBI" id="CHEBI:18420"/>
    </ligand>
</feature>
<feature type="binding site" evidence="1">
    <location>
        <position position="288"/>
    </location>
    <ligand>
        <name>substrate</name>
    </ligand>
</feature>
<feature type="binding site" evidence="1">
    <location>
        <position position="321"/>
    </location>
    <ligand>
        <name>substrate</name>
    </ligand>
</feature>
<feature type="binding site" evidence="1">
    <location>
        <position position="368"/>
    </location>
    <ligand>
        <name>substrate</name>
    </ligand>
</feature>
<feature type="site" description="Transition state stabilizer" evidence="1">
    <location>
        <position position="329"/>
    </location>
</feature>
<feature type="modified residue" description="N6-carboxylysine" evidence="1">
    <location>
        <position position="191"/>
    </location>
</feature>
<accession>P50922</accession>
<comment type="function">
    <text>RuBisCO catalyzes two reactions: the carboxylation of D-ribulose 1,5-bisphosphate, the primary event in carbon dioxide fixation, as well as the oxidative fragmentation of the pentose substrate. Both reactions occur simultaneously and in competition at the same active site.</text>
</comment>
<comment type="catalytic activity">
    <reaction>
        <text>2 (2R)-3-phosphoglycerate + 2 H(+) = D-ribulose 1,5-bisphosphate + CO2 + H2O</text>
        <dbReference type="Rhea" id="RHEA:23124"/>
        <dbReference type="ChEBI" id="CHEBI:15377"/>
        <dbReference type="ChEBI" id="CHEBI:15378"/>
        <dbReference type="ChEBI" id="CHEBI:16526"/>
        <dbReference type="ChEBI" id="CHEBI:57870"/>
        <dbReference type="ChEBI" id="CHEBI:58272"/>
        <dbReference type="EC" id="4.1.1.39"/>
    </reaction>
</comment>
<comment type="catalytic activity">
    <reaction>
        <text>D-ribulose 1,5-bisphosphate + O2 = 2-phosphoglycolate + (2R)-3-phosphoglycerate + 2 H(+)</text>
        <dbReference type="Rhea" id="RHEA:36631"/>
        <dbReference type="ChEBI" id="CHEBI:15378"/>
        <dbReference type="ChEBI" id="CHEBI:15379"/>
        <dbReference type="ChEBI" id="CHEBI:57870"/>
        <dbReference type="ChEBI" id="CHEBI:58033"/>
        <dbReference type="ChEBI" id="CHEBI:58272"/>
    </reaction>
</comment>
<comment type="cofactor">
    <cofactor evidence="1">
        <name>Mg(2+)</name>
        <dbReference type="ChEBI" id="CHEBI:18420"/>
    </cofactor>
    <text evidence="1">Binds 1 Mg(2+) ion per subunit.</text>
</comment>
<comment type="subunit">
    <text evidence="1">Homodimer.</text>
</comment>
<comment type="miscellaneous">
    <text evidence="1">The basic functional RuBisCO is composed of a large chain homodimer in a 'head-to-tail' conformation. In contrast to form I RuBisCO, the form II RuBisCO are composed solely of large subunits (By similarity).</text>
</comment>
<comment type="similarity">
    <text evidence="2">Belongs to the RuBisCO large chain family. Type II subfamily.</text>
</comment>
<protein>
    <recommendedName>
        <fullName>Ribulose bisphosphate carboxylase</fullName>
        <shortName>RuBisCO</shortName>
        <ecNumber>4.1.1.39</ecNumber>
    </recommendedName>
</protein>
<reference key="1">
    <citation type="journal article" date="1997" name="FASEB J.">
        <title>Sequence and expression of the form II ribulose-bisphosphate carboxylase/oxygenase (RuBisCO) gene from Rhodobacter capsulatus.</title>
        <authorList>
            <person name="Larimer F.W."/>
            <person name="Lu T.-Y.S."/>
            <person name="Buley D.M."/>
        </authorList>
    </citation>
    <scope>NUCLEOTIDE SEQUENCE [GENOMIC DNA]</scope>
    <source>
        <strain>ATCC 11166 / DSM 1710 / CCUG 31484 / JCM 21090 / LMG 2962 / NBRC 16435 / NCIMB 8254 / ATH 2.3.1</strain>
    </source>
</reference>
<dbReference type="EC" id="4.1.1.39"/>
<dbReference type="EMBL" id="U23145">
    <property type="protein sequence ID" value="AAB82048.1"/>
    <property type="molecule type" value="Genomic_DNA"/>
</dbReference>
<dbReference type="PIR" id="T10506">
    <property type="entry name" value="T10506"/>
</dbReference>
<dbReference type="SMR" id="P50922"/>
<dbReference type="GO" id="GO:0000287">
    <property type="term" value="F:magnesium ion binding"/>
    <property type="evidence" value="ECO:0007669"/>
    <property type="project" value="UniProtKB-UniRule"/>
</dbReference>
<dbReference type="GO" id="GO:0004497">
    <property type="term" value="F:monooxygenase activity"/>
    <property type="evidence" value="ECO:0007669"/>
    <property type="project" value="UniProtKB-KW"/>
</dbReference>
<dbReference type="GO" id="GO:0016984">
    <property type="term" value="F:ribulose-bisphosphate carboxylase activity"/>
    <property type="evidence" value="ECO:0007669"/>
    <property type="project" value="UniProtKB-UniRule"/>
</dbReference>
<dbReference type="GO" id="GO:0019253">
    <property type="term" value="P:reductive pentose-phosphate cycle"/>
    <property type="evidence" value="ECO:0007669"/>
    <property type="project" value="UniProtKB-KW"/>
</dbReference>
<dbReference type="CDD" id="cd08211">
    <property type="entry name" value="RuBisCO_large_II"/>
    <property type="match status" value="1"/>
</dbReference>
<dbReference type="Gene3D" id="3.20.20.110">
    <property type="entry name" value="Ribulose bisphosphate carboxylase, large subunit, C-terminal domain"/>
    <property type="match status" value="1"/>
</dbReference>
<dbReference type="Gene3D" id="3.30.70.150">
    <property type="entry name" value="RuBisCO large subunit, N-terminal domain"/>
    <property type="match status" value="1"/>
</dbReference>
<dbReference type="HAMAP" id="MF_01339">
    <property type="entry name" value="RuBisCO_L_type2"/>
    <property type="match status" value="1"/>
</dbReference>
<dbReference type="InterPro" id="IPR033966">
    <property type="entry name" value="RuBisCO"/>
</dbReference>
<dbReference type="InterPro" id="IPR020878">
    <property type="entry name" value="RuBisCo_large_chain_AS"/>
</dbReference>
<dbReference type="InterPro" id="IPR000685">
    <property type="entry name" value="RuBisCO_lsu_C"/>
</dbReference>
<dbReference type="InterPro" id="IPR036376">
    <property type="entry name" value="RuBisCO_lsu_C_sf"/>
</dbReference>
<dbReference type="InterPro" id="IPR017443">
    <property type="entry name" value="RuBisCO_lsu_fd_N"/>
</dbReference>
<dbReference type="InterPro" id="IPR036422">
    <property type="entry name" value="RuBisCO_lsu_N_sf"/>
</dbReference>
<dbReference type="InterPro" id="IPR020871">
    <property type="entry name" value="RuBisCO_lsuII"/>
</dbReference>
<dbReference type="NCBIfam" id="NF010002">
    <property type="entry name" value="PRK13475.1"/>
    <property type="match status" value="1"/>
</dbReference>
<dbReference type="PANTHER" id="PTHR42704">
    <property type="entry name" value="RIBULOSE BISPHOSPHATE CARBOXYLASE"/>
    <property type="match status" value="1"/>
</dbReference>
<dbReference type="PANTHER" id="PTHR42704:SF17">
    <property type="entry name" value="RIBULOSE BISPHOSPHATE CARBOXYLASE LARGE CHAIN"/>
    <property type="match status" value="1"/>
</dbReference>
<dbReference type="Pfam" id="PF00016">
    <property type="entry name" value="RuBisCO_large"/>
    <property type="match status" value="1"/>
</dbReference>
<dbReference type="Pfam" id="PF02788">
    <property type="entry name" value="RuBisCO_large_N"/>
    <property type="match status" value="1"/>
</dbReference>
<dbReference type="SFLD" id="SFLDS00014">
    <property type="entry name" value="RuBisCO"/>
    <property type="match status" value="1"/>
</dbReference>
<dbReference type="SFLD" id="SFLDG00301">
    <property type="entry name" value="RuBisCO-like_proteins"/>
    <property type="match status" value="1"/>
</dbReference>
<dbReference type="SUPFAM" id="SSF51649">
    <property type="entry name" value="RuBisCo, C-terminal domain"/>
    <property type="match status" value="1"/>
</dbReference>
<dbReference type="SUPFAM" id="SSF54966">
    <property type="entry name" value="RuBisCO, large subunit, small (N-terminal) domain"/>
    <property type="match status" value="1"/>
</dbReference>
<dbReference type="PROSITE" id="PS00157">
    <property type="entry name" value="RUBISCO_LARGE"/>
    <property type="match status" value="1"/>
</dbReference>